<protein>
    <recommendedName>
        <fullName>9-cis-epoxycarotenoid dioxygenase NCED6, chloroplastic</fullName>
        <shortName>AtNCED6</shortName>
        <ecNumber>1.13.11.51</ecNumber>
    </recommendedName>
</protein>
<dbReference type="EC" id="1.13.11.51"/>
<dbReference type="EMBL" id="AB028621">
    <property type="protein sequence ID" value="BAB01363.1"/>
    <property type="molecule type" value="Genomic_DNA"/>
</dbReference>
<dbReference type="EMBL" id="CP002686">
    <property type="protein sequence ID" value="AEE76875.1"/>
    <property type="molecule type" value="Genomic_DNA"/>
</dbReference>
<dbReference type="RefSeq" id="NP_189064.1">
    <property type="nucleotide sequence ID" value="NM_113327.3"/>
</dbReference>
<dbReference type="SMR" id="Q9LRM7"/>
<dbReference type="FunCoup" id="Q9LRM7">
    <property type="interactions" value="28"/>
</dbReference>
<dbReference type="STRING" id="3702.Q9LRM7"/>
<dbReference type="MetOSite" id="Q9LRM7"/>
<dbReference type="PaxDb" id="3702-AT3G24220.1"/>
<dbReference type="ProteomicsDB" id="236816"/>
<dbReference type="EnsemblPlants" id="AT3G24220.1">
    <property type="protein sequence ID" value="AT3G24220.1"/>
    <property type="gene ID" value="AT3G24220"/>
</dbReference>
<dbReference type="GeneID" id="822008"/>
<dbReference type="Gramene" id="AT3G24220.1">
    <property type="protein sequence ID" value="AT3G24220.1"/>
    <property type="gene ID" value="AT3G24220"/>
</dbReference>
<dbReference type="KEGG" id="ath:AT3G24220"/>
<dbReference type="Araport" id="AT3G24220"/>
<dbReference type="TAIR" id="AT3G24220">
    <property type="gene designation" value="NCED6"/>
</dbReference>
<dbReference type="eggNOG" id="KOG1285">
    <property type="taxonomic scope" value="Eukaryota"/>
</dbReference>
<dbReference type="HOGENOM" id="CLU_016472_0_0_1"/>
<dbReference type="InParanoid" id="Q9LRM7"/>
<dbReference type="OMA" id="NPYTHHP"/>
<dbReference type="PhylomeDB" id="Q9LRM7"/>
<dbReference type="BioCyc" id="MetaCyc:AT3G24220-MONOMER"/>
<dbReference type="PRO" id="PR:Q9LRM7"/>
<dbReference type="Proteomes" id="UP000006548">
    <property type="component" value="Chromosome 3"/>
</dbReference>
<dbReference type="ExpressionAtlas" id="Q9LRM7">
    <property type="expression patterns" value="baseline and differential"/>
</dbReference>
<dbReference type="GO" id="GO:0009570">
    <property type="term" value="C:chloroplast stroma"/>
    <property type="evidence" value="ECO:0000314"/>
    <property type="project" value="TAIR"/>
</dbReference>
<dbReference type="GO" id="GO:0009535">
    <property type="term" value="C:chloroplast thylakoid membrane"/>
    <property type="evidence" value="ECO:0000314"/>
    <property type="project" value="TAIR"/>
</dbReference>
<dbReference type="GO" id="GO:0045549">
    <property type="term" value="F:9-cis-epoxycarotenoid dioxygenase activity"/>
    <property type="evidence" value="ECO:0000314"/>
    <property type="project" value="TAIR"/>
</dbReference>
<dbReference type="GO" id="GO:0046872">
    <property type="term" value="F:metal ion binding"/>
    <property type="evidence" value="ECO:0007669"/>
    <property type="project" value="UniProtKB-KW"/>
</dbReference>
<dbReference type="GO" id="GO:0009688">
    <property type="term" value="P:abscisic acid biosynthetic process"/>
    <property type="evidence" value="ECO:0000304"/>
    <property type="project" value="TAIR"/>
</dbReference>
<dbReference type="GO" id="GO:0010114">
    <property type="term" value="P:response to red light"/>
    <property type="evidence" value="ECO:0000270"/>
    <property type="project" value="TAIR"/>
</dbReference>
<dbReference type="GO" id="GO:0009639">
    <property type="term" value="P:response to red or far red light"/>
    <property type="evidence" value="ECO:0000270"/>
    <property type="project" value="TAIR"/>
</dbReference>
<dbReference type="InterPro" id="IPR004294">
    <property type="entry name" value="Carotenoid_Oase"/>
</dbReference>
<dbReference type="PANTHER" id="PTHR10543:SF101">
    <property type="entry name" value="9-CIS-EPOXYCAROTENOID DIOXYGENASE NCED6, CHLOROPLASTIC"/>
    <property type="match status" value="1"/>
</dbReference>
<dbReference type="PANTHER" id="PTHR10543">
    <property type="entry name" value="BETA-CAROTENE DIOXYGENASE"/>
    <property type="match status" value="1"/>
</dbReference>
<dbReference type="Pfam" id="PF03055">
    <property type="entry name" value="RPE65"/>
    <property type="match status" value="1"/>
</dbReference>
<accession>Q9LRM7</accession>
<name>NCED6_ARATH</name>
<comment type="function">
    <text evidence="4 6">Has a 11,12(11',12') 9-cis epoxycarotenoid cleavage activity. Catalyzes the first step of abscisic-acid biosynthesis from carotenoids. Contributes probably to abscisic acid synthesis for the induction of seed dormancy.</text>
</comment>
<comment type="catalytic activity">
    <reaction>
        <text>a 9-cis-epoxycarotenoid + O2 = a 12'-apo-carotenal + 2-cis,4-trans-xanthoxin</text>
        <dbReference type="Rhea" id="RHEA:23328"/>
        <dbReference type="ChEBI" id="CHEBI:15379"/>
        <dbReference type="ChEBI" id="CHEBI:32304"/>
        <dbReference type="ChEBI" id="CHEBI:51972"/>
        <dbReference type="ChEBI" id="CHEBI:51973"/>
        <dbReference type="EC" id="1.13.11.51"/>
    </reaction>
</comment>
<comment type="catalytic activity">
    <reaction>
        <text>9-cis-violaxanthin + O2 = (3S,5R,6S)-5,6-epoxy-3-hydroxy-5,6-dihydro-12'-apo-beta-caroten-12'-al + 2-cis,4-trans-xanthoxin</text>
        <dbReference type="Rhea" id="RHEA:16541"/>
        <dbReference type="ChEBI" id="CHEBI:15379"/>
        <dbReference type="ChEBI" id="CHEBI:32304"/>
        <dbReference type="ChEBI" id="CHEBI:34597"/>
        <dbReference type="ChEBI" id="CHEBI:35305"/>
        <dbReference type="EC" id="1.13.11.51"/>
    </reaction>
</comment>
<comment type="catalytic activity">
    <reaction>
        <text>9'-cis-neoxanthin + O2 = (3S,5R,6R)-3,5-dihydroxy-6,7-didehydro-5,6-dihydro-12'-apo-beta-caroten-12'-al + 2-cis,4-trans-xanthoxin</text>
        <dbReference type="Rhea" id="RHEA:19677"/>
        <dbReference type="ChEBI" id="CHEBI:15379"/>
        <dbReference type="ChEBI" id="CHEBI:32304"/>
        <dbReference type="ChEBI" id="CHEBI:34596"/>
        <dbReference type="ChEBI" id="CHEBI:35306"/>
        <dbReference type="EC" id="1.13.11.51"/>
    </reaction>
</comment>
<comment type="cofactor">
    <cofactor evidence="1">
        <name>Fe(2+)</name>
        <dbReference type="ChEBI" id="CHEBI:29033"/>
    </cofactor>
    <text evidence="1">Binds 1 Fe(2+) ion per subunit.</text>
</comment>
<comment type="subcellular location">
    <subcellularLocation>
        <location evidence="5">Plastid</location>
        <location evidence="5">Chloroplast stroma</location>
    </subcellularLocation>
    <text>Partially bound to the thylakoid.</text>
</comment>
<comment type="tissue specificity">
    <text evidence="5 6">Expressed before fertilization in male and female gametophytes, and then immediately after pollination, restricted to seed endosperm.</text>
</comment>
<comment type="developmental stage">
    <text evidence="6">Expressed in seeds at early and mid-maturation stages.</text>
</comment>
<comment type="induction">
    <text evidence="4 5">Low induction by drought stress.</text>
</comment>
<comment type="disruption phenotype">
    <text evidence="4">Plants exhibit abscisic-acid-deficient phenotypes in seeds, but not in vegetative tissues.</text>
</comment>
<comment type="similarity">
    <text evidence="7">Belongs to the carotenoid oxygenase family.</text>
</comment>
<gene>
    <name type="primary">NCED6</name>
    <name type="ordered locus">At3g24220</name>
    <name type="ORF">MUJ8.12</name>
</gene>
<reference key="1">
    <citation type="journal article" date="2000" name="DNA Res.">
        <title>Structural analysis of Arabidopsis thaliana chromosome 3. I. Sequence features of the regions of 4,504,864 bp covered by sixty P1 and TAC clones.</title>
        <authorList>
            <person name="Sato S."/>
            <person name="Nakamura Y."/>
            <person name="Kaneko T."/>
            <person name="Katoh T."/>
            <person name="Asamizu E."/>
            <person name="Tabata S."/>
        </authorList>
    </citation>
    <scope>NUCLEOTIDE SEQUENCE [LARGE SCALE GENOMIC DNA]</scope>
    <source>
        <strain>cv. Columbia</strain>
    </source>
</reference>
<reference key="2">
    <citation type="journal article" date="2017" name="Plant J.">
        <title>Araport11: a complete reannotation of the Arabidopsis thaliana reference genome.</title>
        <authorList>
            <person name="Cheng C.Y."/>
            <person name="Krishnakumar V."/>
            <person name="Chan A.P."/>
            <person name="Thibaud-Nissen F."/>
            <person name="Schobel S."/>
            <person name="Town C.D."/>
        </authorList>
    </citation>
    <scope>GENOME REANNOTATION</scope>
    <source>
        <strain>cv. Columbia</strain>
    </source>
</reference>
<reference key="3">
    <citation type="journal article" date="2001" name="Plant J.">
        <title>Regulation of drought tolerance by gene manipulation of 9-cis-epoxycarotenoid dioxygenase, a key enzyme in abscisic acid biosynthesis in Arabidopsis.</title>
        <authorList>
            <person name="Iuchi S."/>
            <person name="Kobayashi M."/>
            <person name="Taji T."/>
            <person name="Naramoto M."/>
            <person name="Seki M."/>
            <person name="Kato T."/>
            <person name="Tabata S."/>
            <person name="Kakubari Y."/>
            <person name="Yamaguchi-Shinozaki K."/>
            <person name="Shinozaki K."/>
        </authorList>
    </citation>
    <scope>FUNCTION</scope>
    <scope>INDUCTION BY DROUGHT STRESS</scope>
    <scope>DISRUPTION PHENOTYPE</scope>
</reference>
<reference key="4">
    <citation type="journal article" date="2003" name="Plant J.">
        <title>Molecular characterization of the Arabidopsis 9-cis epoxycarotenoid dioxygenase gene family.</title>
        <authorList>
            <person name="Tan B.-C."/>
            <person name="Joseph L.M."/>
            <person name="Deng W.-T."/>
            <person name="Liu L."/>
            <person name="Li Q.-B."/>
            <person name="Cline K."/>
            <person name="McCarty D.R."/>
        </authorList>
    </citation>
    <scope>SUBCELLULAR LOCATION</scope>
    <scope>TISSUE SPECIFICITY</scope>
    <scope>INDUCTION BY DROUGHT STRESS</scope>
</reference>
<reference key="5">
    <citation type="journal article" date="2006" name="Plant J.">
        <title>Functional analysis of Arabidopsis NCED6 and NCED9 genes indicates that ABA synthesized in the endosperm is involved in the induction of seed dormancy.</title>
        <authorList>
            <person name="Lefebvre V."/>
            <person name="North H."/>
            <person name="Frey A."/>
            <person name="Sotta B."/>
            <person name="Seo M."/>
            <person name="Okamoto M."/>
            <person name="Nambara E."/>
            <person name="Marion-Poll A."/>
        </authorList>
    </citation>
    <scope>FUNCTION</scope>
    <scope>DEVELOPMENTAL STAGE</scope>
    <scope>TISSUE SPECIFICITY</scope>
</reference>
<sequence>MQHSLRSDLLPTKTSPRSHLLPQPKNANISRRILINPFKIPTLPDLTSPVPSPVKLKPTYPNLNLLQKLAATMLDKIESSIVIPMEQNRPLPKPTDPAVQLSGNFAPVNECPVQNGLEVVGQIPSCLKGVYIRNGANPMFPPLAGHHLFDGDGMIHAVSIGFDNQVSYSCRYTKTNRLVQETALGRSVFPKPIGELHGHSGLARLALFTARAGIGLVDGTRGMGVANAGVVFFNGRLLAMSEDDLPYQVKIDGQGDLETIGRFGFDDQIDSSVIAHPKVDATTGDLHTLSYNVLKKPHLRYLKFNTCGKKTRDVEITLPEPTMIHDFAITENFVVIPDQQMVFKLSEMIRGGSPVIYVKEKMARFGVLSKQDLTGSDINWVDVPDCFCFHLWNAWEERTEEGDPVIVVIGSCMSPPDTIFSESGEPTRVELSEIRLNMRTKESNRKVIVTGVNLEAGHINRSYVGRKSQFVYIAIADPWPKCSGIAKVDIQNGTVSEFNYGPSRFGGEPCFVPEGEGEEDKGYVMGFVRDEEKDESEFVVVDATDMKQVAAVRLPERVPYGFHGTFVSENQLKEQVF</sequence>
<keyword id="KW-0937">Abscisic acid biosynthesis</keyword>
<keyword id="KW-0150">Chloroplast</keyword>
<keyword id="KW-0223">Dioxygenase</keyword>
<keyword id="KW-0408">Iron</keyword>
<keyword id="KW-0479">Metal-binding</keyword>
<keyword id="KW-0560">Oxidoreductase</keyword>
<keyword id="KW-0934">Plastid</keyword>
<keyword id="KW-1185">Reference proteome</keyword>
<keyword id="KW-0809">Transit peptide</keyword>
<evidence type="ECO:0000250" key="1">
    <source>
        <dbReference type="UniProtKB" id="O24592"/>
    </source>
</evidence>
<evidence type="ECO:0000255" key="2"/>
<evidence type="ECO:0000256" key="3">
    <source>
        <dbReference type="SAM" id="MobiDB-lite"/>
    </source>
</evidence>
<evidence type="ECO:0000269" key="4">
    <source>
    </source>
</evidence>
<evidence type="ECO:0000269" key="5">
    <source>
    </source>
</evidence>
<evidence type="ECO:0000269" key="6">
    <source>
    </source>
</evidence>
<evidence type="ECO:0000305" key="7"/>
<proteinExistence type="evidence at transcript level"/>
<feature type="transit peptide" description="Chloroplast" evidence="2">
    <location>
        <begin position="1"/>
        <end status="unknown"/>
    </location>
</feature>
<feature type="chain" id="PRO_0000285995" description="9-cis-epoxycarotenoid dioxygenase NCED6, chloroplastic">
    <location>
        <begin status="unknown"/>
        <end position="577"/>
    </location>
</feature>
<feature type="region of interest" description="Disordered" evidence="3">
    <location>
        <begin position="1"/>
        <end position="25"/>
    </location>
</feature>
<feature type="binding site" evidence="1">
    <location>
        <position position="276"/>
    </location>
    <ligand>
        <name>Fe cation</name>
        <dbReference type="ChEBI" id="CHEBI:24875"/>
    </ligand>
</feature>
<feature type="binding site" evidence="1">
    <location>
        <position position="325"/>
    </location>
    <ligand>
        <name>Fe cation</name>
        <dbReference type="ChEBI" id="CHEBI:24875"/>
    </ligand>
</feature>
<feature type="binding site" evidence="1">
    <location>
        <position position="390"/>
    </location>
    <ligand>
        <name>Fe cation</name>
        <dbReference type="ChEBI" id="CHEBI:24875"/>
    </ligand>
</feature>
<feature type="binding site" evidence="1">
    <location>
        <position position="563"/>
    </location>
    <ligand>
        <name>Fe cation</name>
        <dbReference type="ChEBI" id="CHEBI:24875"/>
    </ligand>
</feature>
<organism>
    <name type="scientific">Arabidopsis thaliana</name>
    <name type="common">Mouse-ear cress</name>
    <dbReference type="NCBI Taxonomy" id="3702"/>
    <lineage>
        <taxon>Eukaryota</taxon>
        <taxon>Viridiplantae</taxon>
        <taxon>Streptophyta</taxon>
        <taxon>Embryophyta</taxon>
        <taxon>Tracheophyta</taxon>
        <taxon>Spermatophyta</taxon>
        <taxon>Magnoliopsida</taxon>
        <taxon>eudicotyledons</taxon>
        <taxon>Gunneridae</taxon>
        <taxon>Pentapetalae</taxon>
        <taxon>rosids</taxon>
        <taxon>malvids</taxon>
        <taxon>Brassicales</taxon>
        <taxon>Brassicaceae</taxon>
        <taxon>Camelineae</taxon>
        <taxon>Arabidopsis</taxon>
    </lineage>
</organism>